<proteinExistence type="inferred from homology"/>
<dbReference type="EC" id="2.5.1.61" evidence="1"/>
<dbReference type="EMBL" id="CP001139">
    <property type="protein sequence ID" value="ACH64888.1"/>
    <property type="molecule type" value="Genomic_DNA"/>
</dbReference>
<dbReference type="RefSeq" id="WP_011260939.1">
    <property type="nucleotide sequence ID" value="NC_011184.1"/>
</dbReference>
<dbReference type="SMR" id="B5FF97"/>
<dbReference type="GeneID" id="54162694"/>
<dbReference type="KEGG" id="vfm:VFMJ11_0064"/>
<dbReference type="HOGENOM" id="CLU_019704_0_2_6"/>
<dbReference type="UniPathway" id="UPA00251">
    <property type="reaction ID" value="UER00319"/>
</dbReference>
<dbReference type="Proteomes" id="UP000001857">
    <property type="component" value="Chromosome I"/>
</dbReference>
<dbReference type="GO" id="GO:0005737">
    <property type="term" value="C:cytoplasm"/>
    <property type="evidence" value="ECO:0007669"/>
    <property type="project" value="TreeGrafter"/>
</dbReference>
<dbReference type="GO" id="GO:0004418">
    <property type="term" value="F:hydroxymethylbilane synthase activity"/>
    <property type="evidence" value="ECO:0007669"/>
    <property type="project" value="UniProtKB-UniRule"/>
</dbReference>
<dbReference type="GO" id="GO:0006782">
    <property type="term" value="P:protoporphyrinogen IX biosynthetic process"/>
    <property type="evidence" value="ECO:0007669"/>
    <property type="project" value="UniProtKB-UniRule"/>
</dbReference>
<dbReference type="CDD" id="cd13646">
    <property type="entry name" value="PBP2_EcHMBS_like"/>
    <property type="match status" value="1"/>
</dbReference>
<dbReference type="FunFam" id="3.30.160.40:FF:000002">
    <property type="entry name" value="Porphobilinogen deaminase"/>
    <property type="match status" value="1"/>
</dbReference>
<dbReference type="FunFam" id="3.40.190.10:FF:000004">
    <property type="entry name" value="Porphobilinogen deaminase"/>
    <property type="match status" value="1"/>
</dbReference>
<dbReference type="FunFam" id="3.40.190.10:FF:000005">
    <property type="entry name" value="Porphobilinogen deaminase"/>
    <property type="match status" value="1"/>
</dbReference>
<dbReference type="Gene3D" id="3.40.190.10">
    <property type="entry name" value="Periplasmic binding protein-like II"/>
    <property type="match status" value="2"/>
</dbReference>
<dbReference type="Gene3D" id="3.30.160.40">
    <property type="entry name" value="Porphobilinogen deaminase, C-terminal domain"/>
    <property type="match status" value="1"/>
</dbReference>
<dbReference type="HAMAP" id="MF_00260">
    <property type="entry name" value="Porphobil_deam"/>
    <property type="match status" value="1"/>
</dbReference>
<dbReference type="InterPro" id="IPR000860">
    <property type="entry name" value="HemC"/>
</dbReference>
<dbReference type="InterPro" id="IPR022419">
    <property type="entry name" value="Porphobilin_deaminase_cofac_BS"/>
</dbReference>
<dbReference type="InterPro" id="IPR022417">
    <property type="entry name" value="Porphobilin_deaminase_N"/>
</dbReference>
<dbReference type="InterPro" id="IPR022418">
    <property type="entry name" value="Porphobilinogen_deaminase_C"/>
</dbReference>
<dbReference type="InterPro" id="IPR036803">
    <property type="entry name" value="Porphobilinogen_deaminase_C_sf"/>
</dbReference>
<dbReference type="NCBIfam" id="TIGR00212">
    <property type="entry name" value="hemC"/>
    <property type="match status" value="1"/>
</dbReference>
<dbReference type="PANTHER" id="PTHR11557">
    <property type="entry name" value="PORPHOBILINOGEN DEAMINASE"/>
    <property type="match status" value="1"/>
</dbReference>
<dbReference type="PANTHER" id="PTHR11557:SF0">
    <property type="entry name" value="PORPHOBILINOGEN DEAMINASE"/>
    <property type="match status" value="1"/>
</dbReference>
<dbReference type="Pfam" id="PF01379">
    <property type="entry name" value="Porphobil_deam"/>
    <property type="match status" value="1"/>
</dbReference>
<dbReference type="Pfam" id="PF03900">
    <property type="entry name" value="Porphobil_deamC"/>
    <property type="match status" value="1"/>
</dbReference>
<dbReference type="PIRSF" id="PIRSF001438">
    <property type="entry name" value="4pyrrol_synth_OHMeBilane_synth"/>
    <property type="match status" value="1"/>
</dbReference>
<dbReference type="PRINTS" id="PR00151">
    <property type="entry name" value="PORPHBDMNASE"/>
</dbReference>
<dbReference type="SUPFAM" id="SSF53850">
    <property type="entry name" value="Periplasmic binding protein-like II"/>
    <property type="match status" value="1"/>
</dbReference>
<dbReference type="SUPFAM" id="SSF54782">
    <property type="entry name" value="Porphobilinogen deaminase (hydroxymethylbilane synthase), C-terminal domain"/>
    <property type="match status" value="1"/>
</dbReference>
<dbReference type="PROSITE" id="PS00533">
    <property type="entry name" value="PORPHOBILINOGEN_DEAM"/>
    <property type="match status" value="1"/>
</dbReference>
<organism>
    <name type="scientific">Aliivibrio fischeri (strain MJ11)</name>
    <name type="common">Vibrio fischeri</name>
    <dbReference type="NCBI Taxonomy" id="388396"/>
    <lineage>
        <taxon>Bacteria</taxon>
        <taxon>Pseudomonadati</taxon>
        <taxon>Pseudomonadota</taxon>
        <taxon>Gammaproteobacteria</taxon>
        <taxon>Vibrionales</taxon>
        <taxon>Vibrionaceae</taxon>
        <taxon>Aliivibrio</taxon>
    </lineage>
</organism>
<keyword id="KW-0627">Porphyrin biosynthesis</keyword>
<keyword id="KW-0808">Transferase</keyword>
<reference key="1">
    <citation type="submission" date="2008-08" db="EMBL/GenBank/DDBJ databases">
        <title>Complete sequence of Vibrio fischeri strain MJ11.</title>
        <authorList>
            <person name="Mandel M.J."/>
            <person name="Stabb E.V."/>
            <person name="Ruby E.G."/>
            <person name="Ferriera S."/>
            <person name="Johnson J."/>
            <person name="Kravitz S."/>
            <person name="Beeson K."/>
            <person name="Sutton G."/>
            <person name="Rogers Y.-H."/>
            <person name="Friedman R."/>
            <person name="Frazier M."/>
            <person name="Venter J.C."/>
        </authorList>
    </citation>
    <scope>NUCLEOTIDE SEQUENCE [LARGE SCALE GENOMIC DNA]</scope>
    <source>
        <strain>MJ11</strain>
    </source>
</reference>
<evidence type="ECO:0000255" key="1">
    <source>
        <dbReference type="HAMAP-Rule" id="MF_00260"/>
    </source>
</evidence>
<feature type="chain" id="PRO_1000114183" description="Porphobilinogen deaminase">
    <location>
        <begin position="1"/>
        <end position="311"/>
    </location>
</feature>
<feature type="modified residue" description="S-(dipyrrolylmethanemethyl)cysteine" evidence="1">
    <location>
        <position position="243"/>
    </location>
</feature>
<protein>
    <recommendedName>
        <fullName evidence="1">Porphobilinogen deaminase</fullName>
        <shortName evidence="1">PBG</shortName>
        <ecNumber evidence="1">2.5.1.61</ecNumber>
    </recommendedName>
    <alternativeName>
        <fullName evidence="1">Hydroxymethylbilane synthase</fullName>
        <shortName evidence="1">HMBS</shortName>
    </alternativeName>
    <alternativeName>
        <fullName evidence="1">Pre-uroporphyrinogen synthase</fullName>
    </alternativeName>
</protein>
<sequence length="311" mass="33737">MSQQLPVRIATRKSPLALWQAHFVKDALQAAHPGLEVELVTMVTKGDIILDTPLAKVGGKGLFVKELEVAMLEGRADLAVHSMKDVPVEFPEGLGLVTICEREDPRDAFVSNTYNNIDELPQGAVVGTCSLRRQCQLKEARPDLIIKELRGNVGTRLQKLDDGNYDAIILACAGLIRLGLEDRIKSAIEPEQSLPAVGQGAVGIEARLDDDRLRALLEPLNHPETANRVLCERAMNNRLEGGCQVPIGSYSLIDGDQIWLRALVGEPDGSVMIRGEVSGPVSDAEALGTQLADQLLNDGAKEILERLYAEA</sequence>
<comment type="function">
    <text evidence="1">Tetrapolymerization of the monopyrrole PBG into the hydroxymethylbilane pre-uroporphyrinogen in several discrete steps.</text>
</comment>
<comment type="catalytic activity">
    <reaction evidence="1">
        <text>4 porphobilinogen + H2O = hydroxymethylbilane + 4 NH4(+)</text>
        <dbReference type="Rhea" id="RHEA:13185"/>
        <dbReference type="ChEBI" id="CHEBI:15377"/>
        <dbReference type="ChEBI" id="CHEBI:28938"/>
        <dbReference type="ChEBI" id="CHEBI:57845"/>
        <dbReference type="ChEBI" id="CHEBI:58126"/>
        <dbReference type="EC" id="2.5.1.61"/>
    </reaction>
</comment>
<comment type="cofactor">
    <cofactor evidence="1">
        <name>dipyrromethane</name>
        <dbReference type="ChEBI" id="CHEBI:60342"/>
    </cofactor>
    <text evidence="1">Binds 1 dipyrromethane group covalently.</text>
</comment>
<comment type="pathway">
    <text evidence="1">Porphyrin-containing compound metabolism; protoporphyrin-IX biosynthesis; coproporphyrinogen-III from 5-aminolevulinate: step 2/4.</text>
</comment>
<comment type="subunit">
    <text evidence="1">Monomer.</text>
</comment>
<comment type="miscellaneous">
    <text evidence="1">The porphobilinogen subunits are added to the dipyrromethane group.</text>
</comment>
<comment type="similarity">
    <text evidence="1">Belongs to the HMBS family.</text>
</comment>
<accession>B5FF97</accession>
<gene>
    <name evidence="1" type="primary">hemC</name>
    <name type="ordered locus">VFMJ11_0064</name>
</gene>
<name>HEM3_ALIFM</name>